<sequence length="232" mass="25082">MTFKASVLTLYPEMFPGALGLSLAGRALEAGTWSLEAIQIRDFATDKHRTVDDTPAGGGAGMVMRADVLARAIDHASPPGDTRPRLLMSPRGKPLTQARVRELAAGPGAVILCGRFEGVDQRLIEVRGLEEVSIGDFILSGGEPAALVLLDAVVRLLPGVMGNAVSGEEESFENGLLEHPHYTRPQEFEGREIPQVLTSGNHKKIAAWRREQAEQLTRERRPDLLGAHPLAK</sequence>
<feature type="chain" id="PRO_0000060439" description="tRNA (guanine-N(1)-)-methyltransferase">
    <location>
        <begin position="1"/>
        <end position="232"/>
    </location>
</feature>
<feature type="region of interest" description="Disordered" evidence="2">
    <location>
        <begin position="211"/>
        <end position="232"/>
    </location>
</feature>
<feature type="compositionally biased region" description="Basic and acidic residues" evidence="2">
    <location>
        <begin position="211"/>
        <end position="223"/>
    </location>
</feature>
<feature type="binding site" evidence="1">
    <location>
        <position position="114"/>
    </location>
    <ligand>
        <name>S-adenosyl-L-methionine</name>
        <dbReference type="ChEBI" id="CHEBI:59789"/>
    </ligand>
</feature>
<feature type="binding site" evidence="1">
    <location>
        <begin position="134"/>
        <end position="139"/>
    </location>
    <ligand>
        <name>S-adenosyl-L-methionine</name>
        <dbReference type="ChEBI" id="CHEBI:59789"/>
    </ligand>
</feature>
<comment type="function">
    <text evidence="1">Specifically methylates guanosine-37 in various tRNAs.</text>
</comment>
<comment type="catalytic activity">
    <reaction>
        <text>guanosine(37) in tRNA + S-adenosyl-L-methionine = N(1)-methylguanosine(37) in tRNA + S-adenosyl-L-homocysteine + H(+)</text>
        <dbReference type="Rhea" id="RHEA:36899"/>
        <dbReference type="Rhea" id="RHEA-COMP:10145"/>
        <dbReference type="Rhea" id="RHEA-COMP:10147"/>
        <dbReference type="ChEBI" id="CHEBI:15378"/>
        <dbReference type="ChEBI" id="CHEBI:57856"/>
        <dbReference type="ChEBI" id="CHEBI:59789"/>
        <dbReference type="ChEBI" id="CHEBI:73542"/>
        <dbReference type="ChEBI" id="CHEBI:74269"/>
        <dbReference type="EC" id="2.1.1.228"/>
    </reaction>
</comment>
<comment type="subunit">
    <text evidence="1">Homodimer.</text>
</comment>
<comment type="subcellular location">
    <subcellularLocation>
        <location evidence="3">Cytoplasm</location>
    </subcellularLocation>
</comment>
<comment type="similarity">
    <text evidence="3">Belongs to the RNA methyltransferase TrmD family.</text>
</comment>
<name>TRMD_RHILO</name>
<evidence type="ECO:0000250" key="1"/>
<evidence type="ECO:0000256" key="2">
    <source>
        <dbReference type="SAM" id="MobiDB-lite"/>
    </source>
</evidence>
<evidence type="ECO:0000305" key="3"/>
<accession>Q98EE1</accession>
<reference key="1">
    <citation type="journal article" date="2000" name="DNA Res.">
        <title>Complete genome structure of the nitrogen-fixing symbiotic bacterium Mesorhizobium loti.</title>
        <authorList>
            <person name="Kaneko T."/>
            <person name="Nakamura Y."/>
            <person name="Sato S."/>
            <person name="Asamizu E."/>
            <person name="Kato T."/>
            <person name="Sasamoto S."/>
            <person name="Watanabe A."/>
            <person name="Idesawa K."/>
            <person name="Ishikawa A."/>
            <person name="Kawashima K."/>
            <person name="Kimura T."/>
            <person name="Kishida Y."/>
            <person name="Kiyokawa C."/>
            <person name="Kohara M."/>
            <person name="Matsumoto M."/>
            <person name="Matsuno A."/>
            <person name="Mochizuki Y."/>
            <person name="Nakayama S."/>
            <person name="Nakazaki N."/>
            <person name="Shimpo S."/>
            <person name="Sugimoto M."/>
            <person name="Takeuchi C."/>
            <person name="Yamada M."/>
            <person name="Tabata S."/>
        </authorList>
    </citation>
    <scope>NUCLEOTIDE SEQUENCE [LARGE SCALE GENOMIC DNA]</scope>
    <source>
        <strain>LMG 29417 / CECT 9101 / MAFF 303099</strain>
    </source>
</reference>
<keyword id="KW-0963">Cytoplasm</keyword>
<keyword id="KW-0489">Methyltransferase</keyword>
<keyword id="KW-0949">S-adenosyl-L-methionine</keyword>
<keyword id="KW-0808">Transferase</keyword>
<keyword id="KW-0819">tRNA processing</keyword>
<gene>
    <name type="primary">trmD</name>
    <name type="ordered locus">mll4287</name>
</gene>
<proteinExistence type="inferred from homology"/>
<organism>
    <name type="scientific">Mesorhizobium japonicum (strain LMG 29417 / CECT 9101 / MAFF 303099)</name>
    <name type="common">Mesorhizobium loti (strain MAFF 303099)</name>
    <dbReference type="NCBI Taxonomy" id="266835"/>
    <lineage>
        <taxon>Bacteria</taxon>
        <taxon>Pseudomonadati</taxon>
        <taxon>Pseudomonadota</taxon>
        <taxon>Alphaproteobacteria</taxon>
        <taxon>Hyphomicrobiales</taxon>
        <taxon>Phyllobacteriaceae</taxon>
        <taxon>Mesorhizobium</taxon>
    </lineage>
</organism>
<dbReference type="EC" id="2.1.1.228"/>
<dbReference type="EMBL" id="BA000012">
    <property type="protein sequence ID" value="BAB50979.1"/>
    <property type="molecule type" value="Genomic_DNA"/>
</dbReference>
<dbReference type="RefSeq" id="WP_010912321.1">
    <property type="nucleotide sequence ID" value="NC_002678.2"/>
</dbReference>
<dbReference type="SMR" id="Q98EE1"/>
<dbReference type="KEGG" id="mlo:mll4287"/>
<dbReference type="PATRIC" id="fig|266835.9.peg.3382"/>
<dbReference type="eggNOG" id="COG0336">
    <property type="taxonomic scope" value="Bacteria"/>
</dbReference>
<dbReference type="HOGENOM" id="CLU_047363_0_1_5"/>
<dbReference type="Proteomes" id="UP000000552">
    <property type="component" value="Chromosome"/>
</dbReference>
<dbReference type="GO" id="GO:0005829">
    <property type="term" value="C:cytosol"/>
    <property type="evidence" value="ECO:0007669"/>
    <property type="project" value="TreeGrafter"/>
</dbReference>
<dbReference type="GO" id="GO:0052906">
    <property type="term" value="F:tRNA (guanine(37)-N1)-methyltransferase activity"/>
    <property type="evidence" value="ECO:0007669"/>
    <property type="project" value="UniProtKB-UniRule"/>
</dbReference>
<dbReference type="GO" id="GO:0002939">
    <property type="term" value="P:tRNA N1-guanine methylation"/>
    <property type="evidence" value="ECO:0007669"/>
    <property type="project" value="TreeGrafter"/>
</dbReference>
<dbReference type="CDD" id="cd18080">
    <property type="entry name" value="TrmD-like"/>
    <property type="match status" value="1"/>
</dbReference>
<dbReference type="FunFam" id="1.10.1270.20:FF:000001">
    <property type="entry name" value="tRNA (guanine-N(1)-)-methyltransferase"/>
    <property type="match status" value="1"/>
</dbReference>
<dbReference type="Gene3D" id="3.40.1280.10">
    <property type="match status" value="1"/>
</dbReference>
<dbReference type="Gene3D" id="1.10.1270.20">
    <property type="entry name" value="tRNA(m1g37)methyltransferase, domain 2"/>
    <property type="match status" value="1"/>
</dbReference>
<dbReference type="HAMAP" id="MF_00605">
    <property type="entry name" value="TrmD"/>
    <property type="match status" value="1"/>
</dbReference>
<dbReference type="InterPro" id="IPR029028">
    <property type="entry name" value="Alpha/beta_knot_MTases"/>
</dbReference>
<dbReference type="InterPro" id="IPR023148">
    <property type="entry name" value="tRNA_m1G_MeTrfase_C_sf"/>
</dbReference>
<dbReference type="InterPro" id="IPR002649">
    <property type="entry name" value="tRNA_m1G_MeTrfase_TrmD"/>
</dbReference>
<dbReference type="InterPro" id="IPR029026">
    <property type="entry name" value="tRNA_m1G_MTases_N"/>
</dbReference>
<dbReference type="InterPro" id="IPR016009">
    <property type="entry name" value="tRNA_MeTrfase_TRMD/TRM10"/>
</dbReference>
<dbReference type="NCBIfam" id="NF000648">
    <property type="entry name" value="PRK00026.1"/>
    <property type="match status" value="1"/>
</dbReference>
<dbReference type="NCBIfam" id="TIGR00088">
    <property type="entry name" value="trmD"/>
    <property type="match status" value="1"/>
</dbReference>
<dbReference type="PANTHER" id="PTHR46417">
    <property type="entry name" value="TRNA (GUANINE-N(1)-)-METHYLTRANSFERASE"/>
    <property type="match status" value="1"/>
</dbReference>
<dbReference type="PANTHER" id="PTHR46417:SF1">
    <property type="entry name" value="TRNA (GUANINE-N(1)-)-METHYLTRANSFERASE"/>
    <property type="match status" value="1"/>
</dbReference>
<dbReference type="Pfam" id="PF01746">
    <property type="entry name" value="tRNA_m1G_MT"/>
    <property type="match status" value="1"/>
</dbReference>
<dbReference type="PIRSF" id="PIRSF000386">
    <property type="entry name" value="tRNA_mtase"/>
    <property type="match status" value="1"/>
</dbReference>
<dbReference type="SUPFAM" id="SSF75217">
    <property type="entry name" value="alpha/beta knot"/>
    <property type="match status" value="1"/>
</dbReference>
<protein>
    <recommendedName>
        <fullName>tRNA (guanine-N(1)-)-methyltransferase</fullName>
        <ecNumber>2.1.1.228</ecNumber>
    </recommendedName>
    <alternativeName>
        <fullName>M1G-methyltransferase</fullName>
    </alternativeName>
    <alternativeName>
        <fullName>tRNA [GM37] methyltransferase</fullName>
    </alternativeName>
</protein>